<organism>
    <name type="scientific">Hepatitis B virus genotype C subtype ayr (isolate Human/Japan/Okamoto/-)</name>
    <name type="common">HBV-C</name>
    <dbReference type="NCBI Taxonomy" id="928302"/>
    <lineage>
        <taxon>Viruses</taxon>
        <taxon>Riboviria</taxon>
        <taxon>Pararnavirae</taxon>
        <taxon>Artverviricota</taxon>
        <taxon>Revtraviricetes</taxon>
        <taxon>Blubervirales</taxon>
        <taxon>Hepadnaviridae</taxon>
        <taxon>Orthohepadnavirus</taxon>
        <taxon>Hepatitis B virus</taxon>
        <taxon>hepatitis B virus genotype C</taxon>
    </lineage>
</organism>
<proteinExistence type="inferred from homology"/>
<sequence>MQLFPLCLIISCSCPTVQASKLCLGWLWGMDIDPYKEFGASVELLSFLPSDFFPSIRDLLDTASALYREALESPEHCSPHHTALRQAILCWGELMNLATWVGSNLEDPASRELVVSYVNVNMGLKIRQLLWFHISCLTFGRETVLEYLVSFGVWIRTPPAYRPPNAPILSTLPETTVVRRRGRSPRRRTPSPRRRRSQSPRRRRSQSRESQC</sequence>
<reference key="1">
    <citation type="journal article" date="1986" name="J. Gen. Virol.">
        <title>Nucleotide sequence of a cloned hepatitis B virus genome, subtype ayr: comparison with genomes of the other three subtypes.</title>
        <authorList>
            <person name="Okamoto H."/>
            <person name="Imai M."/>
            <person name="Shimozaki M."/>
            <person name="Hoshi Y."/>
            <person name="Iizuka H."/>
            <person name="Gotanda T."/>
            <person name="Tsuda F."/>
            <person name="Miyakawa Y."/>
            <person name="Mayumi M."/>
        </authorList>
    </citation>
    <scope>NUCLEOTIDE SEQUENCE [GENOMIC DNA]</scope>
</reference>
<organismHost>
    <name type="scientific">Homo sapiens</name>
    <name type="common">Human</name>
    <dbReference type="NCBI Taxonomy" id="9606"/>
</organismHost>
<organismHost>
    <name type="scientific">Pan troglodytes</name>
    <name type="common">Chimpanzee</name>
    <dbReference type="NCBI Taxonomy" id="9598"/>
</organismHost>
<dbReference type="EMBL" id="X04615">
    <property type="status" value="NOT_ANNOTATED_CDS"/>
    <property type="molecule type" value="Genomic_DNA"/>
</dbReference>
<dbReference type="SMR" id="P0C767"/>
<dbReference type="Proteomes" id="UP000008591">
    <property type="component" value="Segment"/>
</dbReference>
<dbReference type="GO" id="GO:0005576">
    <property type="term" value="C:extracellular region"/>
    <property type="evidence" value="ECO:0007669"/>
    <property type="project" value="UniProtKB-SubCell"/>
</dbReference>
<dbReference type="GO" id="GO:0043657">
    <property type="term" value="C:host cell"/>
    <property type="evidence" value="ECO:0007669"/>
    <property type="project" value="GOC"/>
</dbReference>
<dbReference type="GO" id="GO:0030430">
    <property type="term" value="C:host cell cytoplasm"/>
    <property type="evidence" value="ECO:0007669"/>
    <property type="project" value="UniProtKB-UniRule"/>
</dbReference>
<dbReference type="GO" id="GO:0042025">
    <property type="term" value="C:host cell nucleus"/>
    <property type="evidence" value="ECO:0007669"/>
    <property type="project" value="UniProtKB-SubCell"/>
</dbReference>
<dbReference type="GO" id="GO:0039619">
    <property type="term" value="C:T=4 icosahedral viral capsid"/>
    <property type="evidence" value="ECO:0007669"/>
    <property type="project" value="UniProtKB-UniRule"/>
</dbReference>
<dbReference type="GO" id="GO:0003677">
    <property type="term" value="F:DNA binding"/>
    <property type="evidence" value="ECO:0007669"/>
    <property type="project" value="UniProtKB-UniRule"/>
</dbReference>
<dbReference type="GO" id="GO:0003723">
    <property type="term" value="F:RNA binding"/>
    <property type="evidence" value="ECO:0007669"/>
    <property type="project" value="UniProtKB-UniRule"/>
</dbReference>
<dbReference type="GO" id="GO:0005198">
    <property type="term" value="F:structural molecule activity"/>
    <property type="evidence" value="ECO:0007669"/>
    <property type="project" value="UniProtKB-UniRule"/>
</dbReference>
<dbReference type="GO" id="GO:0075521">
    <property type="term" value="P:microtubule-dependent intracellular transport of viral material towards nucleus"/>
    <property type="evidence" value="ECO:0007669"/>
    <property type="project" value="UniProtKB-UniRule"/>
</dbReference>
<dbReference type="GO" id="GO:0046718">
    <property type="term" value="P:symbiont entry into host cell"/>
    <property type="evidence" value="ECO:0007669"/>
    <property type="project" value="UniProtKB-UniRule"/>
</dbReference>
<dbReference type="GO" id="GO:0075732">
    <property type="term" value="P:viral penetration into host nucleus"/>
    <property type="evidence" value="ECO:0007669"/>
    <property type="project" value="UniProtKB-UniRule"/>
</dbReference>
<dbReference type="FunFam" id="1.10.4090.10:FF:000001">
    <property type="entry name" value="Capsid protein"/>
    <property type="match status" value="1"/>
</dbReference>
<dbReference type="Gene3D" id="1.10.4090.10">
    <property type="entry name" value="Viral capsid, core domain supefamily, Hepatitis B virus"/>
    <property type="match status" value="1"/>
</dbReference>
<dbReference type="HAMAP" id="MF_04076">
    <property type="entry name" value="HBV_HBEAG"/>
    <property type="match status" value="1"/>
</dbReference>
<dbReference type="InterPro" id="IPR013195">
    <property type="entry name" value="Hepatitis_B_virus_capsid_N"/>
</dbReference>
<dbReference type="InterPro" id="IPR002006">
    <property type="entry name" value="Hepatitis_core"/>
</dbReference>
<dbReference type="InterPro" id="IPR036459">
    <property type="entry name" value="Viral_capsid_core_dom_sf_HBV"/>
</dbReference>
<dbReference type="Pfam" id="PF08290">
    <property type="entry name" value="Hep_core_N"/>
    <property type="match status" value="1"/>
</dbReference>
<dbReference type="Pfam" id="PF00906">
    <property type="entry name" value="Hepatitis_core"/>
    <property type="match status" value="3"/>
</dbReference>
<dbReference type="SUPFAM" id="SSF47852">
    <property type="entry name" value="Hepatitis B viral capsid (hbcag)"/>
    <property type="match status" value="1"/>
</dbReference>
<gene>
    <name evidence="1" type="primary">C</name>
</gene>
<comment type="function">
    <text evidence="1">May regulate immune response to the intracellular capsid in acting as a T-cell tolerogen, by having an immunoregulatory effect which prevents destruction of infected cells by cytotoxic T-cells. This immune regulation may predispose to chronicity during perinatal infections and prevent severe liver injury during adult infections.</text>
</comment>
<comment type="subunit">
    <text evidence="1">Homodimerizes.</text>
</comment>
<comment type="subcellular location">
    <subcellularLocation>
        <location evidence="1">Secreted</location>
    </subcellularLocation>
    <subcellularLocation>
        <location evidence="1">Host nucleus</location>
    </subcellularLocation>
</comment>
<comment type="alternative products">
    <event type="alternative initiation"/>
    <isoform>
        <id>P0C767-1</id>
        <name>External core antigen</name>
        <sequence type="displayed"/>
    </isoform>
    <isoform>
        <id>Q76R61-1</id>
        <name>Capsid protein</name>
        <sequence type="external"/>
    </isoform>
</comment>
<comment type="PTM">
    <text evidence="1">Phosphorylated.</text>
</comment>
<comment type="PTM">
    <text evidence="1">Cleaved by host furin.</text>
</comment>
<comment type="similarity">
    <text evidence="1">Belongs to the orthohepadnavirus precore antigen family.</text>
</comment>
<evidence type="ECO:0000255" key="1">
    <source>
        <dbReference type="HAMAP-Rule" id="MF_04076"/>
    </source>
</evidence>
<evidence type="ECO:0000256" key="2">
    <source>
        <dbReference type="SAM" id="MobiDB-lite"/>
    </source>
</evidence>
<feature type="signal peptide" evidence="1">
    <location>
        <begin position="1"/>
        <end position="19"/>
    </location>
</feature>
<feature type="chain" id="PRO_0000390309" description="External core antigen" evidence="1">
    <location>
        <begin position="20"/>
        <end position="212"/>
    </location>
</feature>
<feature type="repeat" description="1; half-length">
    <location>
        <begin position="184"/>
        <end position="190"/>
    </location>
</feature>
<feature type="repeat" description="2">
    <location>
        <begin position="191"/>
        <end position="198"/>
    </location>
</feature>
<feature type="repeat" description="3">
    <location>
        <begin position="199"/>
        <end position="206"/>
    </location>
</feature>
<feature type="region of interest" description="HBEAG" evidence="1">
    <location>
        <begin position="25"/>
        <end position="27"/>
    </location>
</feature>
<feature type="region of interest" description="Disordered" evidence="2">
    <location>
        <begin position="165"/>
        <end position="212"/>
    </location>
</feature>
<feature type="region of interest" description="3 X 8 AA repeats of S-P-R-R-R-R-S-Q">
    <location>
        <begin position="184"/>
        <end position="206"/>
    </location>
</feature>
<feature type="compositionally biased region" description="Basic residues" evidence="2">
    <location>
        <begin position="178"/>
        <end position="205"/>
    </location>
</feature>
<feature type="site" description="Cleavage; by host" evidence="1">
    <location>
        <begin position="183"/>
        <end position="184"/>
    </location>
</feature>
<feature type="disulfide bond" description="Interchain" evidence="1">
    <location>
        <position position="77"/>
    </location>
</feature>
<feature type="disulfide bond" description="Interchain" evidence="1">
    <location>
        <position position="90"/>
    </location>
</feature>
<name>HBEAG_HBVCJ</name>
<accession>P0C767</accession>
<protein>
    <recommendedName>
        <fullName evidence="1">External core antigen</fullName>
    </recommendedName>
    <alternativeName>
        <fullName evidence="1">HBeAg</fullName>
    </alternativeName>
    <alternativeName>
        <fullName evidence="1">Precore protein</fullName>
    </alternativeName>
    <alternativeName>
        <fullName evidence="1">p25</fullName>
    </alternativeName>
</protein>
<keyword id="KW-0024">Alternative initiation</keyword>
<keyword id="KW-1015">Disulfide bond</keyword>
<keyword id="KW-1048">Host nucleus</keyword>
<keyword id="KW-0945">Host-virus interaction</keyword>
<keyword id="KW-1185">Reference proteome</keyword>
<keyword id="KW-0677">Repeat</keyword>
<keyword id="KW-0964">Secreted</keyword>
<keyword id="KW-0732">Signal</keyword>
<keyword id="KW-0899">Viral immunoevasion</keyword>